<proteinExistence type="evidence at protein level"/>
<reference key="1">
    <citation type="journal article" date="1997" name="Comp. Biochem. Physiol.">
        <title>Isolation and amino acid sequences of two Kunitz-type protease inhibitors from the sea anemone Anthopleura aff. xanthogrammica.</title>
        <authorList>
            <person name="Minagawa S."/>
            <person name="Ishida M."/>
            <person name="Shimakura K."/>
            <person name="Nagashima Y."/>
            <person name="Shiomi K."/>
        </authorList>
    </citation>
    <scope>PROTEIN SEQUENCE</scope>
    <scope>FUNCTION</scope>
</reference>
<reference key="2">
    <citation type="journal article" date="2012" name="Toxicon">
        <title>Development of a rational nomenclature for naming peptide and protein toxins from sea anemones.</title>
        <authorList>
            <person name="Oliveira J.S."/>
            <person name="Fuentes-Silva D."/>
            <person name="King G.F."/>
        </authorList>
    </citation>
    <scope>NOMENCLATURE</scope>
</reference>
<keyword id="KW-0903">Direct protein sequencing</keyword>
<keyword id="KW-1015">Disulfide bond</keyword>
<keyword id="KW-0166">Nematocyst</keyword>
<keyword id="KW-0646">Protease inhibitor</keyword>
<keyword id="KW-0964">Secreted</keyword>
<keyword id="KW-0722">Serine protease inhibitor</keyword>
<evidence type="ECO:0000250" key="1"/>
<evidence type="ECO:0000255" key="2">
    <source>
        <dbReference type="PROSITE-ProRule" id="PRU00031"/>
    </source>
</evidence>
<evidence type="ECO:0000269" key="3">
    <source>
    </source>
</evidence>
<evidence type="ECO:0000303" key="4">
    <source>
    </source>
</evidence>
<evidence type="ECO:0000303" key="5">
    <source>
    </source>
</evidence>
<evidence type="ECO:0000305" key="6"/>
<feature type="chain" id="PRO_0000155417" description="PI-actitoxin-Axm2b" evidence="3">
    <location>
        <begin position="1"/>
        <end position="58"/>
    </location>
</feature>
<feature type="domain" description="BPTI/Kunitz inhibitor" evidence="2">
    <location>
        <begin position="5"/>
        <end position="55"/>
    </location>
</feature>
<feature type="site" description="Reactive bond" evidence="1">
    <location>
        <begin position="15"/>
        <end position="16"/>
    </location>
</feature>
<feature type="disulfide bond" evidence="2">
    <location>
        <begin position="5"/>
        <end position="55"/>
    </location>
</feature>
<feature type="disulfide bond" evidence="2">
    <location>
        <begin position="14"/>
        <end position="38"/>
    </location>
</feature>
<feature type="disulfide bond" evidence="2">
    <location>
        <begin position="30"/>
        <end position="51"/>
    </location>
</feature>
<dbReference type="SMR" id="P81548"/>
<dbReference type="GO" id="GO:0005615">
    <property type="term" value="C:extracellular space"/>
    <property type="evidence" value="ECO:0007669"/>
    <property type="project" value="TreeGrafter"/>
</dbReference>
<dbReference type="GO" id="GO:0042151">
    <property type="term" value="C:nematocyst"/>
    <property type="evidence" value="ECO:0007669"/>
    <property type="project" value="UniProtKB-SubCell"/>
</dbReference>
<dbReference type="GO" id="GO:0004867">
    <property type="term" value="F:serine-type endopeptidase inhibitor activity"/>
    <property type="evidence" value="ECO:0007669"/>
    <property type="project" value="UniProtKB-KW"/>
</dbReference>
<dbReference type="FunFam" id="4.10.410.10:FF:000021">
    <property type="entry name" value="Serine protease inhibitor, putative"/>
    <property type="match status" value="1"/>
</dbReference>
<dbReference type="Gene3D" id="4.10.410.10">
    <property type="entry name" value="Pancreatic trypsin inhibitor Kunitz domain"/>
    <property type="match status" value="1"/>
</dbReference>
<dbReference type="InterPro" id="IPR002223">
    <property type="entry name" value="Kunitz_BPTI"/>
</dbReference>
<dbReference type="InterPro" id="IPR036880">
    <property type="entry name" value="Kunitz_BPTI_sf"/>
</dbReference>
<dbReference type="InterPro" id="IPR020901">
    <property type="entry name" value="Prtase_inh_Kunz-CS"/>
</dbReference>
<dbReference type="InterPro" id="IPR050098">
    <property type="entry name" value="TFPI/VKTCI-like"/>
</dbReference>
<dbReference type="PANTHER" id="PTHR10083">
    <property type="entry name" value="KUNITZ-TYPE PROTEASE INHIBITOR-RELATED"/>
    <property type="match status" value="1"/>
</dbReference>
<dbReference type="PANTHER" id="PTHR10083:SF376">
    <property type="entry name" value="SERINE PEPTIDASE INHIBITOR, KUNITZ TYPE, 3"/>
    <property type="match status" value="1"/>
</dbReference>
<dbReference type="Pfam" id="PF00014">
    <property type="entry name" value="Kunitz_BPTI"/>
    <property type="match status" value="1"/>
</dbReference>
<dbReference type="PRINTS" id="PR00759">
    <property type="entry name" value="BASICPTASE"/>
</dbReference>
<dbReference type="SMART" id="SM00131">
    <property type="entry name" value="KU"/>
    <property type="match status" value="1"/>
</dbReference>
<dbReference type="SUPFAM" id="SSF57362">
    <property type="entry name" value="BPTI-like"/>
    <property type="match status" value="1"/>
</dbReference>
<dbReference type="PROSITE" id="PS00280">
    <property type="entry name" value="BPTI_KUNITZ_1"/>
    <property type="match status" value="1"/>
</dbReference>
<dbReference type="PROSITE" id="PS50279">
    <property type="entry name" value="BPTI_KUNITZ_2"/>
    <property type="match status" value="1"/>
</dbReference>
<sequence>INSICLLPSDGGVCRGRFTNYYYNSRTRRCETFRYGGCGGNANNFHTLRQCQATCYSS</sequence>
<accession>P81548</accession>
<name>VKT2_ANTAF</name>
<protein>
    <recommendedName>
        <fullName evidence="4">PI-actitoxin-Axm2b</fullName>
        <shortName evidence="4">PI-AITX-Axm2b</shortName>
    </recommendedName>
    <alternativeName>
        <fullName evidence="5">Kunitz-type proteinase inhibitor AXPI-II</fullName>
    </alternativeName>
</protein>
<organism>
    <name type="scientific">Anthopleura aff. xanthogrammica</name>
    <name type="common">Sea anemone</name>
    <dbReference type="NCBI Taxonomy" id="152178"/>
    <lineage>
        <taxon>Eukaryota</taxon>
        <taxon>Metazoa</taxon>
        <taxon>Cnidaria</taxon>
        <taxon>Anthozoa</taxon>
        <taxon>Hexacorallia</taxon>
        <taxon>Actiniaria</taxon>
        <taxon>Actiniidae</taxon>
        <taxon>Anthopleura</taxon>
    </lineage>
</organism>
<comment type="function">
    <text evidence="3">Serine protease inhibitor. Shows activity on trypsin and also shows a weak inhibition against alpha-chymotrypsin.</text>
</comment>
<comment type="subcellular location">
    <subcellularLocation>
        <location evidence="6">Secreted</location>
    </subcellularLocation>
    <subcellularLocation>
        <location evidence="6">Nematocyst</location>
    </subcellularLocation>
</comment>
<comment type="similarity">
    <text evidence="6">Belongs to the venom Kunitz-type family. Sea anemone type 2 potassium channel toxin subfamily.</text>
</comment>